<reference key="1">
    <citation type="submission" date="2003-05" db="EMBL/GenBank/DDBJ databases">
        <authorList>
            <consortium name="NIH - Zebrafish Gene Collection (ZGC) project"/>
        </authorList>
    </citation>
    <scope>NUCLEOTIDE SEQUENCE [LARGE SCALE MRNA]</scope>
    <source>
        <tissue>Kidney</tissue>
    </source>
</reference>
<keyword id="KW-0143">Chaperone</keyword>
<keyword id="KW-0156">Chromatin regulator</keyword>
<keyword id="KW-0235">DNA replication</keyword>
<keyword id="KW-0539">Nucleus</keyword>
<keyword id="KW-1185">Reference proteome</keyword>
<keyword id="KW-0677">Repeat</keyword>
<keyword id="KW-0678">Repressor</keyword>
<keyword id="KW-0804">Transcription</keyword>
<keyword id="KW-0805">Transcription regulation</keyword>
<keyword id="KW-0853">WD repeat</keyword>
<accession>Q7ZTY4</accession>
<accession>Q6NWL5</accession>
<name>RBBP7_DANRE</name>
<organism>
    <name type="scientific">Danio rerio</name>
    <name type="common">Zebrafish</name>
    <name type="synonym">Brachydanio rerio</name>
    <dbReference type="NCBI Taxonomy" id="7955"/>
    <lineage>
        <taxon>Eukaryota</taxon>
        <taxon>Metazoa</taxon>
        <taxon>Chordata</taxon>
        <taxon>Craniata</taxon>
        <taxon>Vertebrata</taxon>
        <taxon>Euteleostomi</taxon>
        <taxon>Actinopterygii</taxon>
        <taxon>Neopterygii</taxon>
        <taxon>Teleostei</taxon>
        <taxon>Ostariophysi</taxon>
        <taxon>Cypriniformes</taxon>
        <taxon>Danionidae</taxon>
        <taxon>Danioninae</taxon>
        <taxon>Danio</taxon>
    </lineage>
</organism>
<gene>
    <name type="primary">rbbp7</name>
    <name type="synonym">rbb4l</name>
</gene>
<feature type="chain" id="PRO_0000223247" description="Histone-binding protein RBBP7">
    <location>
        <begin position="1"/>
        <end position="426"/>
    </location>
</feature>
<feature type="repeat" description="WD 1">
    <location>
        <begin position="47"/>
        <end position="123"/>
    </location>
</feature>
<feature type="repeat" description="WD 2">
    <location>
        <begin position="129"/>
        <end position="174"/>
    </location>
</feature>
<feature type="repeat" description="WD 3">
    <location>
        <begin position="182"/>
        <end position="218"/>
    </location>
</feature>
<feature type="repeat" description="WD 4">
    <location>
        <begin position="229"/>
        <end position="270"/>
    </location>
</feature>
<feature type="repeat" description="WD 5">
    <location>
        <begin position="276"/>
        <end position="313"/>
    </location>
</feature>
<feature type="repeat" description="WD 6">
    <location>
        <begin position="319"/>
        <end position="370"/>
    </location>
</feature>
<feature type="repeat" description="WD 7">
    <location>
        <begin position="377"/>
        <end position="404"/>
    </location>
</feature>
<feature type="sequence conflict" description="In Ref. 1; AAH67546." evidence="2" ref="1">
    <original>A</original>
    <variation>V</variation>
    <location>
        <position position="83"/>
    </location>
</feature>
<feature type="sequence conflict" description="In Ref. 1; AAH67546." evidence="2" ref="1">
    <original>A</original>
    <variation>V</variation>
    <location>
        <position position="151"/>
    </location>
</feature>
<comment type="function">
    <text evidence="1">Core histone-binding subunit that may target chromatin remodeling factors, histone acetyltransferases and histone deacetylases to their histone substrates in a manner that is regulated by nucleosomal DNA. Component of several complexes which regulate chromatin metabolism.</text>
</comment>
<comment type="subunit">
    <text evidence="1">Binds directly to helix 1 of the histone fold of histone H4, a region that is not accessible when H4 is in chromatin.</text>
</comment>
<comment type="subcellular location">
    <subcellularLocation>
        <location evidence="1">Nucleus</location>
    </subcellularLocation>
</comment>
<comment type="similarity">
    <text evidence="2">Belongs to the WD repeat RBAP46/RBAP48/MSI1 family.</text>
</comment>
<comment type="sequence caution" evidence="2">
    <conflict type="frameshift">
        <sequence resource="EMBL-CDS" id="AAH67546"/>
    </conflict>
</comment>
<proteinExistence type="evidence at transcript level"/>
<evidence type="ECO:0000250" key="1">
    <source>
        <dbReference type="UniProtKB" id="Q16576"/>
    </source>
</evidence>
<evidence type="ECO:0000305" key="2"/>
<dbReference type="EMBL" id="BC052110">
    <property type="protein sequence ID" value="AAH52110.1"/>
    <property type="molecule type" value="mRNA"/>
</dbReference>
<dbReference type="EMBL" id="BC067546">
    <property type="protein sequence ID" value="AAH67546.1"/>
    <property type="status" value="ALT_FRAME"/>
    <property type="molecule type" value="mRNA"/>
</dbReference>
<dbReference type="RefSeq" id="NP_997775.1">
    <property type="nucleotide sequence ID" value="NM_212610.1"/>
</dbReference>
<dbReference type="SMR" id="Q7ZTY4"/>
<dbReference type="FunCoup" id="Q7ZTY4">
    <property type="interactions" value="1866"/>
</dbReference>
<dbReference type="STRING" id="7955.ENSDARP00000117542"/>
<dbReference type="PaxDb" id="7955-ENSDARP00000025096"/>
<dbReference type="GeneID" id="322129"/>
<dbReference type="KEGG" id="dre:322129"/>
<dbReference type="AGR" id="ZFIN:ZDB-GENE-030131-848"/>
<dbReference type="CTD" id="5931"/>
<dbReference type="ZFIN" id="ZDB-GENE-030131-848">
    <property type="gene designation" value="rbbp7"/>
</dbReference>
<dbReference type="eggNOG" id="KOG0264">
    <property type="taxonomic scope" value="Eukaryota"/>
</dbReference>
<dbReference type="InParanoid" id="Q7ZTY4"/>
<dbReference type="OrthoDB" id="427795at2759"/>
<dbReference type="PhylomeDB" id="Q7ZTY4"/>
<dbReference type="Reactome" id="R-DRE-212300">
    <property type="pathway name" value="PRC2 methylates histones and DNA"/>
</dbReference>
<dbReference type="Reactome" id="R-DRE-2559580">
    <property type="pathway name" value="Oxidative Stress Induced Senescence"/>
</dbReference>
<dbReference type="Reactome" id="R-DRE-3214847">
    <property type="pathway name" value="HATs acetylate histones"/>
</dbReference>
<dbReference type="Reactome" id="R-DRE-8951664">
    <property type="pathway name" value="Neddylation"/>
</dbReference>
<dbReference type="PRO" id="PR:Q7ZTY4"/>
<dbReference type="Proteomes" id="UP000000437">
    <property type="component" value="Alternate scaffold 11"/>
</dbReference>
<dbReference type="Proteomes" id="UP000000437">
    <property type="component" value="Chromosome 11"/>
</dbReference>
<dbReference type="GO" id="GO:0035098">
    <property type="term" value="C:ESC/E(Z) complex"/>
    <property type="evidence" value="ECO:0000250"/>
    <property type="project" value="UniProtKB"/>
</dbReference>
<dbReference type="GO" id="GO:0005634">
    <property type="term" value="C:nucleus"/>
    <property type="evidence" value="ECO:0000250"/>
    <property type="project" value="UniProtKB"/>
</dbReference>
<dbReference type="GO" id="GO:0016581">
    <property type="term" value="C:NuRD complex"/>
    <property type="evidence" value="ECO:0000250"/>
    <property type="project" value="UniProtKB"/>
</dbReference>
<dbReference type="GO" id="GO:0042393">
    <property type="term" value="F:histone binding"/>
    <property type="evidence" value="ECO:0000318"/>
    <property type="project" value="GO_Central"/>
</dbReference>
<dbReference type="GO" id="GO:0006338">
    <property type="term" value="P:chromatin remodeling"/>
    <property type="evidence" value="ECO:0000318"/>
    <property type="project" value="GO_Central"/>
</dbReference>
<dbReference type="GO" id="GO:0006260">
    <property type="term" value="P:DNA replication"/>
    <property type="evidence" value="ECO:0007669"/>
    <property type="project" value="UniProtKB-KW"/>
</dbReference>
<dbReference type="GO" id="GO:0031101">
    <property type="term" value="P:fin regeneration"/>
    <property type="evidence" value="ECO:0000316"/>
    <property type="project" value="ZFIN"/>
</dbReference>
<dbReference type="GO" id="GO:0002244">
    <property type="term" value="P:hematopoietic progenitor cell differentiation"/>
    <property type="evidence" value="ECO:0000315"/>
    <property type="project" value="ZFIN"/>
</dbReference>
<dbReference type="GO" id="GO:0006355">
    <property type="term" value="P:regulation of DNA-templated transcription"/>
    <property type="evidence" value="ECO:0000318"/>
    <property type="project" value="GO_Central"/>
</dbReference>
<dbReference type="FunFam" id="2.130.10.10:FF:000021">
    <property type="entry name" value="histone-binding protein RBBP4 isoform X1"/>
    <property type="match status" value="1"/>
</dbReference>
<dbReference type="Gene3D" id="2.130.10.10">
    <property type="entry name" value="YVTN repeat-like/Quinoprotein amine dehydrogenase"/>
    <property type="match status" value="1"/>
</dbReference>
<dbReference type="InterPro" id="IPR020472">
    <property type="entry name" value="G-protein_beta_WD-40_rep"/>
</dbReference>
<dbReference type="InterPro" id="IPR022052">
    <property type="entry name" value="Histone-bd_RBBP4-like_N"/>
</dbReference>
<dbReference type="InterPro" id="IPR015943">
    <property type="entry name" value="WD40/YVTN_repeat-like_dom_sf"/>
</dbReference>
<dbReference type="InterPro" id="IPR019775">
    <property type="entry name" value="WD40_repeat_CS"/>
</dbReference>
<dbReference type="InterPro" id="IPR036322">
    <property type="entry name" value="WD40_repeat_dom_sf"/>
</dbReference>
<dbReference type="InterPro" id="IPR001680">
    <property type="entry name" value="WD40_rpt"/>
</dbReference>
<dbReference type="InterPro" id="IPR050459">
    <property type="entry name" value="WD_repeat_RBAP46/RBAP48/MSI1"/>
</dbReference>
<dbReference type="PANTHER" id="PTHR22850">
    <property type="entry name" value="WD40 REPEAT FAMILY"/>
    <property type="match status" value="1"/>
</dbReference>
<dbReference type="Pfam" id="PF12265">
    <property type="entry name" value="CAF1C_H4-bd"/>
    <property type="match status" value="1"/>
</dbReference>
<dbReference type="Pfam" id="PF00400">
    <property type="entry name" value="WD40"/>
    <property type="match status" value="5"/>
</dbReference>
<dbReference type="PRINTS" id="PR00320">
    <property type="entry name" value="GPROTEINBRPT"/>
</dbReference>
<dbReference type="SMART" id="SM00320">
    <property type="entry name" value="WD40"/>
    <property type="match status" value="6"/>
</dbReference>
<dbReference type="SUPFAM" id="SSF50978">
    <property type="entry name" value="WD40 repeat-like"/>
    <property type="match status" value="1"/>
</dbReference>
<dbReference type="PROSITE" id="PS00678">
    <property type="entry name" value="WD_REPEATS_1"/>
    <property type="match status" value="3"/>
</dbReference>
<dbReference type="PROSITE" id="PS50082">
    <property type="entry name" value="WD_REPEATS_2"/>
    <property type="match status" value="5"/>
</dbReference>
<dbReference type="PROSITE" id="PS50294">
    <property type="entry name" value="WD_REPEATS_REGION"/>
    <property type="match status" value="1"/>
</dbReference>
<sequence length="426" mass="47752">MADKEVYDDAVEERVINEEYKIWKKNTPFLYDLVMTHALEWPSLTVQWLPDVNRPEGKDYVVHRLVLGTHTSDEQNHLVIASAQIPNDDAQFDASHYDSEKGAEFGGFGSVSGKIEIEIKINHEGEVNRARYMPQNPCIIATKTPTSDVLAFDYTKHPSKPDPSGDCSPDLRLRGHQKEGYGLSWNPNLSGNLLSASDDHTICLWDISGAPKEGKIVDAKTIFTGHTAVVEDVSWHLLHESLFGSVADDQKLMIWDTRSNNTSKPSHSVDAHTAEVNCLSFNPYSEFILATGSADKTVALWDLRNLKLKLHSFESHKDEIFQVQWSPHNETILASSGTDRRLNVWDLSKIGEEQSAEDAEDGPPELLFIHGGHTAKISDFSWNPNEPWVICSVSEDNIMQVWQMAENIYNDEEPDTPASELEGQAS</sequence>
<protein>
    <recommendedName>
        <fullName>Histone-binding protein RBBP7</fullName>
    </recommendedName>
    <alternativeName>
        <fullName>Retinoblastoma-binding protein 7</fullName>
        <shortName>RBBP-7</shortName>
    </alternativeName>
</protein>